<comment type="function">
    <text evidence="1">Endonuclease that resolves Holliday junction intermediates in genetic recombination. Cleaves mobile four-strand junctions by introducing symmetrical nicks in paired strands. Promotes annealing of linear ssDNA with homologous dsDNA. Required for DNA repair, homologous recombination and chromosome segregation.</text>
</comment>
<comment type="catalytic activity">
    <reaction evidence="1">
        <text>Endonucleolytic cleavage at a junction such as a reciprocal single-stranded crossover between two homologous DNA duplexes (Holliday junction).</text>
        <dbReference type="EC" id="3.1.21.10"/>
    </reaction>
</comment>
<comment type="cofactor">
    <cofactor evidence="1">
        <name>Mg(2+)</name>
        <dbReference type="ChEBI" id="CHEBI:18420"/>
    </cofactor>
    <text evidence="1">Binds 1 Mg(2+) ion per subunit.</text>
</comment>
<comment type="subcellular location">
    <subcellularLocation>
        <location evidence="1">Cytoplasm</location>
    </subcellularLocation>
</comment>
<comment type="similarity">
    <text evidence="1">Belongs to the RecU family.</text>
</comment>
<keyword id="KW-0963">Cytoplasm</keyword>
<keyword id="KW-0227">DNA damage</keyword>
<keyword id="KW-0233">DNA recombination</keyword>
<keyword id="KW-0234">DNA repair</keyword>
<keyword id="KW-0255">Endonuclease</keyword>
<keyword id="KW-0378">Hydrolase</keyword>
<keyword id="KW-0460">Magnesium</keyword>
<keyword id="KW-0479">Metal-binding</keyword>
<keyword id="KW-0540">Nuclease</keyword>
<name>RECU_GEOSW</name>
<gene>
    <name evidence="1" type="primary">recU</name>
    <name type="ordered locus">GWCH70_2106</name>
</gene>
<organism>
    <name type="scientific">Geobacillus sp. (strain WCH70)</name>
    <dbReference type="NCBI Taxonomy" id="471223"/>
    <lineage>
        <taxon>Bacteria</taxon>
        <taxon>Bacillati</taxon>
        <taxon>Bacillota</taxon>
        <taxon>Bacilli</taxon>
        <taxon>Bacillales</taxon>
        <taxon>Anoxybacillaceae</taxon>
        <taxon>Geobacillus</taxon>
    </lineage>
</organism>
<proteinExistence type="inferred from homology"/>
<protein>
    <recommendedName>
        <fullName evidence="1">Holliday junction resolvase RecU</fullName>
        <ecNumber evidence="1">3.1.21.10</ecNumber>
    </recommendedName>
    <alternativeName>
        <fullName evidence="1">Recombination protein U homolog</fullName>
    </alternativeName>
</protein>
<accession>C5D324</accession>
<sequence length="201" mass="23743">MIFKYPGGKTYETKQMNKSIRPFQPNYGNRGMTLEEDLNATNEYYREHGIAVIHKKPTPVQIVRVDYPKRSAAVIKEAYFKQASTTDYNGVYRGKYIDFEAKETKNKTSFPLKNFHEHQIHHMQQVLRHGGICFVILRFTTLNEVYLLDANHLIMFWEQQRSGGRKSIPKREIERYGHYIALGYQPRIDYISVVEKVYFSH</sequence>
<feature type="chain" id="PRO_1000203172" description="Holliday junction resolvase RecU">
    <location>
        <begin position="1"/>
        <end position="201"/>
    </location>
</feature>
<feature type="binding site" evidence="1">
    <location>
        <position position="85"/>
    </location>
    <ligand>
        <name>Mg(2+)</name>
        <dbReference type="ChEBI" id="CHEBI:18420"/>
    </ligand>
</feature>
<feature type="binding site" evidence="1">
    <location>
        <position position="87"/>
    </location>
    <ligand>
        <name>Mg(2+)</name>
        <dbReference type="ChEBI" id="CHEBI:18420"/>
    </ligand>
</feature>
<feature type="binding site" evidence="1">
    <location>
        <position position="100"/>
    </location>
    <ligand>
        <name>Mg(2+)</name>
        <dbReference type="ChEBI" id="CHEBI:18420"/>
    </ligand>
</feature>
<feature type="binding site" evidence="1">
    <location>
        <position position="119"/>
    </location>
    <ligand>
        <name>Mg(2+)</name>
        <dbReference type="ChEBI" id="CHEBI:18420"/>
    </ligand>
</feature>
<feature type="site" description="Transition state stabilizer" evidence="1">
    <location>
        <position position="102"/>
    </location>
</feature>
<evidence type="ECO:0000255" key="1">
    <source>
        <dbReference type="HAMAP-Rule" id="MF_00130"/>
    </source>
</evidence>
<dbReference type="EC" id="3.1.21.10" evidence="1"/>
<dbReference type="EMBL" id="CP001638">
    <property type="protein sequence ID" value="ACS24816.1"/>
    <property type="molecule type" value="Genomic_DNA"/>
</dbReference>
<dbReference type="SMR" id="C5D324"/>
<dbReference type="STRING" id="471223.GWCH70_2106"/>
<dbReference type="KEGG" id="gwc:GWCH70_2106"/>
<dbReference type="eggNOG" id="COG3331">
    <property type="taxonomic scope" value="Bacteria"/>
</dbReference>
<dbReference type="HOGENOM" id="CLU_096340_0_0_9"/>
<dbReference type="OrthoDB" id="9783592at2"/>
<dbReference type="GO" id="GO:0005737">
    <property type="term" value="C:cytoplasm"/>
    <property type="evidence" value="ECO:0007669"/>
    <property type="project" value="UniProtKB-SubCell"/>
</dbReference>
<dbReference type="GO" id="GO:0004519">
    <property type="term" value="F:endonuclease activity"/>
    <property type="evidence" value="ECO:0007669"/>
    <property type="project" value="UniProtKB-UniRule"/>
</dbReference>
<dbReference type="GO" id="GO:0000287">
    <property type="term" value="F:magnesium ion binding"/>
    <property type="evidence" value="ECO:0007669"/>
    <property type="project" value="UniProtKB-UniRule"/>
</dbReference>
<dbReference type="GO" id="GO:0003676">
    <property type="term" value="F:nucleic acid binding"/>
    <property type="evidence" value="ECO:0007669"/>
    <property type="project" value="InterPro"/>
</dbReference>
<dbReference type="GO" id="GO:0007059">
    <property type="term" value="P:chromosome segregation"/>
    <property type="evidence" value="ECO:0007669"/>
    <property type="project" value="UniProtKB-UniRule"/>
</dbReference>
<dbReference type="GO" id="GO:0006310">
    <property type="term" value="P:DNA recombination"/>
    <property type="evidence" value="ECO:0007669"/>
    <property type="project" value="UniProtKB-UniRule"/>
</dbReference>
<dbReference type="GO" id="GO:0006281">
    <property type="term" value="P:DNA repair"/>
    <property type="evidence" value="ECO:0007669"/>
    <property type="project" value="UniProtKB-UniRule"/>
</dbReference>
<dbReference type="CDD" id="cd22354">
    <property type="entry name" value="RecU-like"/>
    <property type="match status" value="1"/>
</dbReference>
<dbReference type="Gene3D" id="3.40.1350.10">
    <property type="match status" value="1"/>
</dbReference>
<dbReference type="HAMAP" id="MF_00130">
    <property type="entry name" value="RecU"/>
    <property type="match status" value="1"/>
</dbReference>
<dbReference type="InterPro" id="IPR004612">
    <property type="entry name" value="Resolv_RecU"/>
</dbReference>
<dbReference type="InterPro" id="IPR011335">
    <property type="entry name" value="Restrct_endonuc-II-like"/>
</dbReference>
<dbReference type="InterPro" id="IPR011856">
    <property type="entry name" value="tRNA_endonuc-like_dom_sf"/>
</dbReference>
<dbReference type="NCBIfam" id="NF002581">
    <property type="entry name" value="PRK02234.1-2"/>
    <property type="match status" value="1"/>
</dbReference>
<dbReference type="NCBIfam" id="NF002584">
    <property type="entry name" value="PRK02234.1-5"/>
    <property type="match status" value="1"/>
</dbReference>
<dbReference type="NCBIfam" id="TIGR00648">
    <property type="entry name" value="recU"/>
    <property type="match status" value="1"/>
</dbReference>
<dbReference type="Pfam" id="PF03838">
    <property type="entry name" value="RecU"/>
    <property type="match status" value="1"/>
</dbReference>
<dbReference type="PIRSF" id="PIRSF037785">
    <property type="entry name" value="RecU"/>
    <property type="match status" value="1"/>
</dbReference>
<dbReference type="SUPFAM" id="SSF52980">
    <property type="entry name" value="Restriction endonuclease-like"/>
    <property type="match status" value="1"/>
</dbReference>
<reference key="1">
    <citation type="submission" date="2009-06" db="EMBL/GenBank/DDBJ databases">
        <title>Complete sequence of chromosome of Geopacillus sp. WCH70.</title>
        <authorList>
            <consortium name="US DOE Joint Genome Institute"/>
            <person name="Lucas S."/>
            <person name="Copeland A."/>
            <person name="Lapidus A."/>
            <person name="Glavina del Rio T."/>
            <person name="Dalin E."/>
            <person name="Tice H."/>
            <person name="Bruce D."/>
            <person name="Goodwin L."/>
            <person name="Pitluck S."/>
            <person name="Chertkov O."/>
            <person name="Brettin T."/>
            <person name="Detter J.C."/>
            <person name="Han C."/>
            <person name="Larimer F."/>
            <person name="Land M."/>
            <person name="Hauser L."/>
            <person name="Kyrpides N."/>
            <person name="Mikhailova N."/>
            <person name="Brumm P."/>
            <person name="Mead D.A."/>
            <person name="Richardson P."/>
        </authorList>
    </citation>
    <scope>NUCLEOTIDE SEQUENCE [LARGE SCALE GENOMIC DNA]</scope>
    <source>
        <strain>WCH70</strain>
    </source>
</reference>